<comment type="function">
    <text evidence="1">Acts as a repressor in the regulation of translation initiation of poly(A)-containing mRNAs. Its inhibitory activity on translation is mediated via its action on PABPC1. Displaces the interaction of PABPC1 with poly(A) RNA and competes with PAIP1 for binding to PABPC1. Its association with PABPC1 results in disruption of the cytoplasmic poly(A) RNP structure organization (By similarity).</text>
</comment>
<comment type="subunit">
    <text evidence="1">Interacts with the second and third RRM domains and C-terminus regions of PABPC1 in a 2:1 stoichiometry.</text>
</comment>
<comment type="subcellular location">
    <subcellularLocation>
        <location evidence="1">Cytoplasm</location>
    </subcellularLocation>
</comment>
<comment type="tissue specificity">
    <text evidence="4">Expressed at high levels in testis with expression also detected in heart, brain, lung, liver, kidney, pancreas and small intestine (at protein level).</text>
</comment>
<comment type="domain">
    <text evidence="1">Only the PABPC1-interacting motif-1 (PAM1) interferes with the binding of PABPC1 to poly(A) RNA and translation initiation.</text>
</comment>
<comment type="PTM">
    <text evidence="2">Ubiquitinated, leading to its degradation by the proteasome.</text>
</comment>
<comment type="similarity">
    <text evidence="5">Belongs to the PAIP2 family.</text>
</comment>
<dbReference type="EMBL" id="AK005462">
    <property type="protein sequence ID" value="BAB24053.1"/>
    <property type="molecule type" value="mRNA"/>
</dbReference>
<dbReference type="EMBL" id="AK009909">
    <property type="protein sequence ID" value="BAB26578.1"/>
    <property type="molecule type" value="mRNA"/>
</dbReference>
<dbReference type="EMBL" id="AK146327">
    <property type="protein sequence ID" value="BAE27082.1"/>
    <property type="molecule type" value="mRNA"/>
</dbReference>
<dbReference type="EMBL" id="AK150957">
    <property type="protein sequence ID" value="BAE29989.1"/>
    <property type="molecule type" value="mRNA"/>
</dbReference>
<dbReference type="EMBL" id="AK169207">
    <property type="protein sequence ID" value="BAE40979.1"/>
    <property type="molecule type" value="mRNA"/>
</dbReference>
<dbReference type="EMBL" id="AK169411">
    <property type="protein sequence ID" value="BAE41157.1"/>
    <property type="molecule type" value="mRNA"/>
</dbReference>
<dbReference type="EMBL" id="BC010190">
    <property type="protein sequence ID" value="AAH10190.1"/>
    <property type="molecule type" value="mRNA"/>
</dbReference>
<dbReference type="CCDS" id="CCDS29143.1"/>
<dbReference type="RefSeq" id="NP_001344399.1">
    <property type="nucleotide sequence ID" value="NM_001357470.1"/>
</dbReference>
<dbReference type="RefSeq" id="NP_001344400.1">
    <property type="nucleotide sequence ID" value="NM_001357471.1"/>
</dbReference>
<dbReference type="RefSeq" id="NP_001344401.1">
    <property type="nucleotide sequence ID" value="NM_001357472.1"/>
</dbReference>
<dbReference type="RefSeq" id="NP_001344402.1">
    <property type="nucleotide sequence ID" value="NM_001357473.1"/>
</dbReference>
<dbReference type="RefSeq" id="NP_080696.1">
    <property type="nucleotide sequence ID" value="NM_026420.3"/>
</dbReference>
<dbReference type="RefSeq" id="XP_011245289.1">
    <property type="nucleotide sequence ID" value="XM_011246987.2"/>
</dbReference>
<dbReference type="RefSeq" id="XP_011245290.1">
    <property type="nucleotide sequence ID" value="XM_011246988.2"/>
</dbReference>
<dbReference type="RefSeq" id="XP_011245291.1">
    <property type="nucleotide sequence ID" value="XM_011246989.1"/>
</dbReference>
<dbReference type="RefSeq" id="XP_011245292.1">
    <property type="nucleotide sequence ID" value="XM_011246990.2"/>
</dbReference>
<dbReference type="RefSeq" id="XP_017173461.1">
    <property type="nucleotide sequence ID" value="XM_017317972.1"/>
</dbReference>
<dbReference type="RefSeq" id="XP_017173462.1">
    <property type="nucleotide sequence ID" value="XM_017317973.3"/>
</dbReference>
<dbReference type="RefSeq" id="XP_030106440.1">
    <property type="nucleotide sequence ID" value="XM_030250580.2"/>
</dbReference>
<dbReference type="RefSeq" id="XP_030106441.1">
    <property type="nucleotide sequence ID" value="XM_030250581.2"/>
</dbReference>
<dbReference type="RefSeq" id="XP_036017154.1">
    <property type="nucleotide sequence ID" value="XM_036161261.1"/>
</dbReference>
<dbReference type="RefSeq" id="XP_036017156.1">
    <property type="nucleotide sequence ID" value="XM_036161263.1"/>
</dbReference>
<dbReference type="RefSeq" id="XP_036017157.1">
    <property type="nucleotide sequence ID" value="XM_036161264.1"/>
</dbReference>
<dbReference type="BMRB" id="Q9D6V8"/>
<dbReference type="FunCoup" id="Q9D6V8">
    <property type="interactions" value="1811"/>
</dbReference>
<dbReference type="STRING" id="10090.ENSMUSP00000158496"/>
<dbReference type="PhosphoSitePlus" id="Q9D6V8"/>
<dbReference type="PaxDb" id="10090-ENSMUSP00000036021"/>
<dbReference type="PeptideAtlas" id="Q9D6V8"/>
<dbReference type="ProteomicsDB" id="287767"/>
<dbReference type="Pumba" id="Q9D6V8"/>
<dbReference type="Antibodypedia" id="26731">
    <property type="antibodies" value="185 antibodies from 24 providers"/>
</dbReference>
<dbReference type="Ensembl" id="ENSMUST00000041314.17">
    <property type="protein sequence ID" value="ENSMUSP00000036021.9"/>
    <property type="gene ID" value="ENSMUSG00000037058.17"/>
</dbReference>
<dbReference type="Ensembl" id="ENSMUST00000235210.2">
    <property type="protein sequence ID" value="ENSMUSP00000157936.2"/>
    <property type="gene ID" value="ENSMUSG00000037058.17"/>
</dbReference>
<dbReference type="Ensembl" id="ENSMUST00000235400.2">
    <property type="protein sequence ID" value="ENSMUSP00000157519.2"/>
    <property type="gene ID" value="ENSMUSG00000037058.17"/>
</dbReference>
<dbReference type="Ensembl" id="ENSMUST00000235476.2">
    <property type="protein sequence ID" value="ENSMUSP00000158496.2"/>
    <property type="gene ID" value="ENSMUSG00000037058.17"/>
</dbReference>
<dbReference type="Ensembl" id="ENSMUST00000236020.2">
    <property type="protein sequence ID" value="ENSMUSP00000157742.2"/>
    <property type="gene ID" value="ENSMUSG00000037058.17"/>
</dbReference>
<dbReference type="Ensembl" id="ENSMUST00000236414.2">
    <property type="protein sequence ID" value="ENSMUSP00000158248.2"/>
    <property type="gene ID" value="ENSMUSG00000037058.17"/>
</dbReference>
<dbReference type="Ensembl" id="ENSMUST00000236666.2">
    <property type="protein sequence ID" value="ENSMUSP00000158160.2"/>
    <property type="gene ID" value="ENSMUSG00000037058.17"/>
</dbReference>
<dbReference type="Ensembl" id="ENSMUST00000236868.2">
    <property type="protein sequence ID" value="ENSMUSP00000157456.2"/>
    <property type="gene ID" value="ENSMUSG00000037058.17"/>
</dbReference>
<dbReference type="GeneID" id="67869"/>
<dbReference type="KEGG" id="mmu:67869"/>
<dbReference type="UCSC" id="uc008emj.1">
    <property type="organism name" value="mouse"/>
</dbReference>
<dbReference type="AGR" id="MGI:1915119"/>
<dbReference type="CTD" id="51247"/>
<dbReference type="MGI" id="MGI:1915119">
    <property type="gene designation" value="Paip2"/>
</dbReference>
<dbReference type="VEuPathDB" id="HostDB:ENSMUSG00000037058"/>
<dbReference type="eggNOG" id="ENOG502RZKX">
    <property type="taxonomic scope" value="Eukaryota"/>
</dbReference>
<dbReference type="GeneTree" id="ENSGT00390000017284"/>
<dbReference type="HOGENOM" id="CLU_134152_0_0_1"/>
<dbReference type="InParanoid" id="Q9D6V8"/>
<dbReference type="OMA" id="PGIQKHN"/>
<dbReference type="OrthoDB" id="5985142at2759"/>
<dbReference type="PhylomeDB" id="Q9D6V8"/>
<dbReference type="TreeFam" id="TF326855"/>
<dbReference type="BioGRID-ORCS" id="67869">
    <property type="hits" value="3 hits in 76 CRISPR screens"/>
</dbReference>
<dbReference type="ChiTaRS" id="Paip2">
    <property type="organism name" value="mouse"/>
</dbReference>
<dbReference type="PRO" id="PR:Q9D6V8"/>
<dbReference type="Proteomes" id="UP000000589">
    <property type="component" value="Chromosome 18"/>
</dbReference>
<dbReference type="RNAct" id="Q9D6V8">
    <property type="molecule type" value="protein"/>
</dbReference>
<dbReference type="Bgee" id="ENSMUSG00000037058">
    <property type="expression patterns" value="Expressed in saccule of membranous labyrinth and 257 other cell types or tissues"/>
</dbReference>
<dbReference type="GO" id="GO:0005737">
    <property type="term" value="C:cytoplasm"/>
    <property type="evidence" value="ECO:0000314"/>
    <property type="project" value="MGI"/>
</dbReference>
<dbReference type="GO" id="GO:0003729">
    <property type="term" value="F:mRNA binding"/>
    <property type="evidence" value="ECO:0000314"/>
    <property type="project" value="MGI"/>
</dbReference>
<dbReference type="GO" id="GO:0000900">
    <property type="term" value="F:mRNA regulatory element binding translation repressor activity"/>
    <property type="evidence" value="ECO:0000266"/>
    <property type="project" value="MGI"/>
</dbReference>
<dbReference type="GO" id="GO:0008143">
    <property type="term" value="F:poly(A) binding"/>
    <property type="evidence" value="ECO:0000266"/>
    <property type="project" value="MGI"/>
</dbReference>
<dbReference type="GO" id="GO:0007613">
    <property type="term" value="P:memory"/>
    <property type="evidence" value="ECO:0000315"/>
    <property type="project" value="MGI"/>
</dbReference>
<dbReference type="GO" id="GO:0017148">
    <property type="term" value="P:negative regulation of translation"/>
    <property type="evidence" value="ECO:0000315"/>
    <property type="project" value="MGI"/>
</dbReference>
<dbReference type="GO" id="GO:0045947">
    <property type="term" value="P:negative regulation of translational initiation"/>
    <property type="evidence" value="ECO:0007669"/>
    <property type="project" value="Ensembl"/>
</dbReference>
<dbReference type="GO" id="GO:1900271">
    <property type="term" value="P:regulation of long-term synaptic potentiation"/>
    <property type="evidence" value="ECO:0000315"/>
    <property type="project" value="MGI"/>
</dbReference>
<dbReference type="GO" id="GO:0006417">
    <property type="term" value="P:regulation of translation"/>
    <property type="evidence" value="ECO:0000315"/>
    <property type="project" value="MGI"/>
</dbReference>
<dbReference type="GO" id="GO:0007283">
    <property type="term" value="P:spermatogenesis"/>
    <property type="evidence" value="ECO:0000315"/>
    <property type="project" value="MGI"/>
</dbReference>
<dbReference type="GO" id="GO:0006412">
    <property type="term" value="P:translation"/>
    <property type="evidence" value="ECO:0000315"/>
    <property type="project" value="MGI"/>
</dbReference>
<dbReference type="InterPro" id="IPR040396">
    <property type="entry name" value="PAIP2-like"/>
</dbReference>
<dbReference type="InterPro" id="IPR009818">
    <property type="entry name" value="PAM2_motif"/>
</dbReference>
<dbReference type="PANTHER" id="PTHR13154">
    <property type="entry name" value="POLYADENYLATE-BINDING PROTEIN-INTERACTING PROTEIN 2"/>
    <property type="match status" value="1"/>
</dbReference>
<dbReference type="PANTHER" id="PTHR13154:SF2">
    <property type="entry name" value="POLYADENYLATE-BINDING PROTEIN-INTERACTING PROTEIN 2"/>
    <property type="match status" value="1"/>
</dbReference>
<dbReference type="Pfam" id="PF07145">
    <property type="entry name" value="PAM2"/>
    <property type="match status" value="1"/>
</dbReference>
<feature type="chain" id="PRO_0000058180" description="Polyadenylate-binding protein-interacting protein 2">
    <location>
        <begin position="1"/>
        <end position="124"/>
    </location>
</feature>
<feature type="region of interest" description="Disordered" evidence="3">
    <location>
        <begin position="1"/>
        <end position="24"/>
    </location>
</feature>
<feature type="region of interest" description="PABPC1-interacting motif-1 (PAM1)" evidence="1">
    <location>
        <begin position="22"/>
        <end position="75"/>
    </location>
</feature>
<feature type="region of interest" description="PABPC1-interacting motif-2 (PAM2)" evidence="1">
    <location>
        <begin position="105"/>
        <end position="120"/>
    </location>
</feature>
<feature type="compositionally biased region" description="Polar residues" evidence="3">
    <location>
        <begin position="1"/>
        <end position="13"/>
    </location>
</feature>
<feature type="sequence conflict" description="In Ref. 1; BAB24053." evidence="5" ref="1">
    <original>P</original>
    <variation>T</variation>
    <location>
        <position position="30"/>
    </location>
</feature>
<sequence length="124" mass="14700">MKDPSRSSTSPSIINDDVIINGHSHEEDNPFAEYMWMENEEEFNRQIEEELWEEEFIERCFQEMLEEEEEHEWFIPARDLPQTMDQIQDQFNDLVISDGSSLEDLVVKSNLNPNAKEFVPGVKY</sequence>
<name>PAIP2_MOUSE</name>
<evidence type="ECO:0000250" key="1"/>
<evidence type="ECO:0000250" key="2">
    <source>
        <dbReference type="UniProtKB" id="Q9BPZ3"/>
    </source>
</evidence>
<evidence type="ECO:0000256" key="3">
    <source>
        <dbReference type="SAM" id="MobiDB-lite"/>
    </source>
</evidence>
<evidence type="ECO:0000269" key="4">
    <source>
    </source>
</evidence>
<evidence type="ECO:0000305" key="5"/>
<protein>
    <recommendedName>
        <fullName>Polyadenylate-binding protein-interacting protein 2</fullName>
        <shortName>PABP-interacting protein 2</shortName>
        <shortName>PAIP-2</shortName>
        <shortName>Poly(A)-binding protein-interacting protein 2</shortName>
    </recommendedName>
</protein>
<reference key="1">
    <citation type="journal article" date="2005" name="Science">
        <title>The transcriptional landscape of the mammalian genome.</title>
        <authorList>
            <person name="Carninci P."/>
            <person name="Kasukawa T."/>
            <person name="Katayama S."/>
            <person name="Gough J."/>
            <person name="Frith M.C."/>
            <person name="Maeda N."/>
            <person name="Oyama R."/>
            <person name="Ravasi T."/>
            <person name="Lenhard B."/>
            <person name="Wells C."/>
            <person name="Kodzius R."/>
            <person name="Shimokawa K."/>
            <person name="Bajic V.B."/>
            <person name="Brenner S.E."/>
            <person name="Batalov S."/>
            <person name="Forrest A.R."/>
            <person name="Zavolan M."/>
            <person name="Davis M.J."/>
            <person name="Wilming L.G."/>
            <person name="Aidinis V."/>
            <person name="Allen J.E."/>
            <person name="Ambesi-Impiombato A."/>
            <person name="Apweiler R."/>
            <person name="Aturaliya R.N."/>
            <person name="Bailey T.L."/>
            <person name="Bansal M."/>
            <person name="Baxter L."/>
            <person name="Beisel K.W."/>
            <person name="Bersano T."/>
            <person name="Bono H."/>
            <person name="Chalk A.M."/>
            <person name="Chiu K.P."/>
            <person name="Choudhary V."/>
            <person name="Christoffels A."/>
            <person name="Clutterbuck D.R."/>
            <person name="Crowe M.L."/>
            <person name="Dalla E."/>
            <person name="Dalrymple B.P."/>
            <person name="de Bono B."/>
            <person name="Della Gatta G."/>
            <person name="di Bernardo D."/>
            <person name="Down T."/>
            <person name="Engstrom P."/>
            <person name="Fagiolini M."/>
            <person name="Faulkner G."/>
            <person name="Fletcher C.F."/>
            <person name="Fukushima T."/>
            <person name="Furuno M."/>
            <person name="Futaki S."/>
            <person name="Gariboldi M."/>
            <person name="Georgii-Hemming P."/>
            <person name="Gingeras T.R."/>
            <person name="Gojobori T."/>
            <person name="Green R.E."/>
            <person name="Gustincich S."/>
            <person name="Harbers M."/>
            <person name="Hayashi Y."/>
            <person name="Hensch T.K."/>
            <person name="Hirokawa N."/>
            <person name="Hill D."/>
            <person name="Huminiecki L."/>
            <person name="Iacono M."/>
            <person name="Ikeo K."/>
            <person name="Iwama A."/>
            <person name="Ishikawa T."/>
            <person name="Jakt M."/>
            <person name="Kanapin A."/>
            <person name="Katoh M."/>
            <person name="Kawasawa Y."/>
            <person name="Kelso J."/>
            <person name="Kitamura H."/>
            <person name="Kitano H."/>
            <person name="Kollias G."/>
            <person name="Krishnan S.P."/>
            <person name="Kruger A."/>
            <person name="Kummerfeld S.K."/>
            <person name="Kurochkin I.V."/>
            <person name="Lareau L.F."/>
            <person name="Lazarevic D."/>
            <person name="Lipovich L."/>
            <person name="Liu J."/>
            <person name="Liuni S."/>
            <person name="McWilliam S."/>
            <person name="Madan Babu M."/>
            <person name="Madera M."/>
            <person name="Marchionni L."/>
            <person name="Matsuda H."/>
            <person name="Matsuzawa S."/>
            <person name="Miki H."/>
            <person name="Mignone F."/>
            <person name="Miyake S."/>
            <person name="Morris K."/>
            <person name="Mottagui-Tabar S."/>
            <person name="Mulder N."/>
            <person name="Nakano N."/>
            <person name="Nakauchi H."/>
            <person name="Ng P."/>
            <person name="Nilsson R."/>
            <person name="Nishiguchi S."/>
            <person name="Nishikawa S."/>
            <person name="Nori F."/>
            <person name="Ohara O."/>
            <person name="Okazaki Y."/>
            <person name="Orlando V."/>
            <person name="Pang K.C."/>
            <person name="Pavan W.J."/>
            <person name="Pavesi G."/>
            <person name="Pesole G."/>
            <person name="Petrovsky N."/>
            <person name="Piazza S."/>
            <person name="Reed J."/>
            <person name="Reid J.F."/>
            <person name="Ring B.Z."/>
            <person name="Ringwald M."/>
            <person name="Rost B."/>
            <person name="Ruan Y."/>
            <person name="Salzberg S.L."/>
            <person name="Sandelin A."/>
            <person name="Schneider C."/>
            <person name="Schoenbach C."/>
            <person name="Sekiguchi K."/>
            <person name="Semple C.A."/>
            <person name="Seno S."/>
            <person name="Sessa L."/>
            <person name="Sheng Y."/>
            <person name="Shibata Y."/>
            <person name="Shimada H."/>
            <person name="Shimada K."/>
            <person name="Silva D."/>
            <person name="Sinclair B."/>
            <person name="Sperling S."/>
            <person name="Stupka E."/>
            <person name="Sugiura K."/>
            <person name="Sultana R."/>
            <person name="Takenaka Y."/>
            <person name="Taki K."/>
            <person name="Tammoja K."/>
            <person name="Tan S.L."/>
            <person name="Tang S."/>
            <person name="Taylor M.S."/>
            <person name="Tegner J."/>
            <person name="Teichmann S.A."/>
            <person name="Ueda H.R."/>
            <person name="van Nimwegen E."/>
            <person name="Verardo R."/>
            <person name="Wei C.L."/>
            <person name="Yagi K."/>
            <person name="Yamanishi H."/>
            <person name="Zabarovsky E."/>
            <person name="Zhu S."/>
            <person name="Zimmer A."/>
            <person name="Hide W."/>
            <person name="Bult C."/>
            <person name="Grimmond S.M."/>
            <person name="Teasdale R.D."/>
            <person name="Liu E.T."/>
            <person name="Brusic V."/>
            <person name="Quackenbush J."/>
            <person name="Wahlestedt C."/>
            <person name="Mattick J.S."/>
            <person name="Hume D.A."/>
            <person name="Kai C."/>
            <person name="Sasaki D."/>
            <person name="Tomaru Y."/>
            <person name="Fukuda S."/>
            <person name="Kanamori-Katayama M."/>
            <person name="Suzuki M."/>
            <person name="Aoki J."/>
            <person name="Arakawa T."/>
            <person name="Iida J."/>
            <person name="Imamura K."/>
            <person name="Itoh M."/>
            <person name="Kato T."/>
            <person name="Kawaji H."/>
            <person name="Kawagashira N."/>
            <person name="Kawashima T."/>
            <person name="Kojima M."/>
            <person name="Kondo S."/>
            <person name="Konno H."/>
            <person name="Nakano K."/>
            <person name="Ninomiya N."/>
            <person name="Nishio T."/>
            <person name="Okada M."/>
            <person name="Plessy C."/>
            <person name="Shibata K."/>
            <person name="Shiraki T."/>
            <person name="Suzuki S."/>
            <person name="Tagami M."/>
            <person name="Waki K."/>
            <person name="Watahiki A."/>
            <person name="Okamura-Oho Y."/>
            <person name="Suzuki H."/>
            <person name="Kawai J."/>
            <person name="Hayashizaki Y."/>
        </authorList>
    </citation>
    <scope>NUCLEOTIDE SEQUENCE [LARGE SCALE MRNA]</scope>
    <source>
        <strain>BALB/cJ</strain>
        <strain>C57BL/6J</strain>
        <tissue>Bone marrow</tissue>
        <tissue>Placenta</tissue>
        <tissue>Stomach</tissue>
        <tissue>Tongue</tissue>
    </source>
</reference>
<reference key="2">
    <citation type="journal article" date="2004" name="Genome Res.">
        <title>The status, quality, and expansion of the NIH full-length cDNA project: the Mammalian Gene Collection (MGC).</title>
        <authorList>
            <consortium name="The MGC Project Team"/>
        </authorList>
    </citation>
    <scope>NUCLEOTIDE SEQUENCE [LARGE SCALE MRNA]</scope>
    <source>
        <strain>FVB/N</strain>
        <tissue>Mammary tumor</tissue>
    </source>
</reference>
<reference key="3">
    <citation type="journal article" date="2006" name="RNA">
        <title>Regulation of poly(A) binding protein function in translation: Characterization of the Paip2 homolog, Paip2B.</title>
        <authorList>
            <person name="Berlanga J.J."/>
            <person name="Baass A."/>
            <person name="Sonenberg N."/>
        </authorList>
    </citation>
    <scope>TISSUE SPECIFICITY</scope>
</reference>
<reference key="4">
    <citation type="journal article" date="2010" name="Cell">
        <title>A tissue-specific atlas of mouse protein phosphorylation and expression.</title>
        <authorList>
            <person name="Huttlin E.L."/>
            <person name="Jedrychowski M.P."/>
            <person name="Elias J.E."/>
            <person name="Goswami T."/>
            <person name="Rad R."/>
            <person name="Beausoleil S.A."/>
            <person name="Villen J."/>
            <person name="Haas W."/>
            <person name="Sowa M.E."/>
            <person name="Gygi S.P."/>
        </authorList>
    </citation>
    <scope>IDENTIFICATION BY MASS SPECTROMETRY [LARGE SCALE ANALYSIS]</scope>
    <source>
        <tissue>Brain</tissue>
        <tissue>Kidney</tissue>
        <tissue>Liver</tissue>
        <tissue>Lung</tissue>
        <tissue>Pancreas</tissue>
        <tissue>Spleen</tissue>
        <tissue>Testis</tissue>
    </source>
</reference>
<organism>
    <name type="scientific">Mus musculus</name>
    <name type="common">Mouse</name>
    <dbReference type="NCBI Taxonomy" id="10090"/>
    <lineage>
        <taxon>Eukaryota</taxon>
        <taxon>Metazoa</taxon>
        <taxon>Chordata</taxon>
        <taxon>Craniata</taxon>
        <taxon>Vertebrata</taxon>
        <taxon>Euteleostomi</taxon>
        <taxon>Mammalia</taxon>
        <taxon>Eutheria</taxon>
        <taxon>Euarchontoglires</taxon>
        <taxon>Glires</taxon>
        <taxon>Rodentia</taxon>
        <taxon>Myomorpha</taxon>
        <taxon>Muroidea</taxon>
        <taxon>Muridae</taxon>
        <taxon>Murinae</taxon>
        <taxon>Mus</taxon>
        <taxon>Mus</taxon>
    </lineage>
</organism>
<keyword id="KW-0963">Cytoplasm</keyword>
<keyword id="KW-1185">Reference proteome</keyword>
<keyword id="KW-0810">Translation regulation</keyword>
<keyword id="KW-0832">Ubl conjugation</keyword>
<accession>Q9D6V8</accession>
<accession>Q3UBH5</accession>
<accession>Q9DAW7</accession>
<proteinExistence type="evidence at protein level"/>
<gene>
    <name type="primary">Paip2</name>
</gene>